<reference key="1">
    <citation type="journal article" date="2009" name="PLoS Genet.">
        <title>Alliance of proteomics and genomics to unravel the specificities of Sahara bacterium Deinococcus deserti.</title>
        <authorList>
            <person name="de Groot A."/>
            <person name="Dulermo R."/>
            <person name="Ortet P."/>
            <person name="Blanchard L."/>
            <person name="Guerin P."/>
            <person name="Fernandez B."/>
            <person name="Vacherie B."/>
            <person name="Dossat C."/>
            <person name="Jolivet E."/>
            <person name="Siguier P."/>
            <person name="Chandler M."/>
            <person name="Barakat M."/>
            <person name="Dedieu A."/>
            <person name="Barbe V."/>
            <person name="Heulin T."/>
            <person name="Sommer S."/>
            <person name="Achouak W."/>
            <person name="Armengaud J."/>
        </authorList>
    </citation>
    <scope>NUCLEOTIDE SEQUENCE [LARGE SCALE GENOMIC DNA]</scope>
    <source>
        <strain>DSM 17065 / CIP 109153 / LMG 22923 / VCD115</strain>
    </source>
</reference>
<gene>
    <name evidence="1" type="primary">rpmC</name>
    <name type="ordered locus">Deide_18870</name>
</gene>
<proteinExistence type="inferred from homology"/>
<sequence length="66" mass="7767">MKPSDMRQLKAEDFQKEIDSRKKELMELRFQAAMGNLAQPHRVTQLRREVAQLNTIRGEQRAGEQK</sequence>
<name>RL29_DEIDV</name>
<accession>C1CXF8</accession>
<comment type="similarity">
    <text evidence="1">Belongs to the universal ribosomal protein uL29 family.</text>
</comment>
<keyword id="KW-1185">Reference proteome</keyword>
<keyword id="KW-0687">Ribonucleoprotein</keyword>
<keyword id="KW-0689">Ribosomal protein</keyword>
<organism>
    <name type="scientific">Deinococcus deserti (strain DSM 17065 / CIP 109153 / LMG 22923 / VCD115)</name>
    <dbReference type="NCBI Taxonomy" id="546414"/>
    <lineage>
        <taxon>Bacteria</taxon>
        <taxon>Thermotogati</taxon>
        <taxon>Deinococcota</taxon>
        <taxon>Deinococci</taxon>
        <taxon>Deinococcales</taxon>
        <taxon>Deinococcaceae</taxon>
        <taxon>Deinococcus</taxon>
    </lineage>
</organism>
<protein>
    <recommendedName>
        <fullName evidence="1">Large ribosomal subunit protein uL29</fullName>
    </recommendedName>
    <alternativeName>
        <fullName evidence="2">50S ribosomal protein L29</fullName>
    </alternativeName>
</protein>
<dbReference type="EMBL" id="CP001114">
    <property type="protein sequence ID" value="ACO46875.1"/>
    <property type="molecule type" value="Genomic_DNA"/>
</dbReference>
<dbReference type="RefSeq" id="WP_012693997.1">
    <property type="nucleotide sequence ID" value="NC_012526.1"/>
</dbReference>
<dbReference type="SMR" id="C1CXF8"/>
<dbReference type="STRING" id="546414.Deide_18870"/>
<dbReference type="PaxDb" id="546414-Deide_18870"/>
<dbReference type="KEGG" id="ddr:Deide_18870"/>
<dbReference type="eggNOG" id="COG0255">
    <property type="taxonomic scope" value="Bacteria"/>
</dbReference>
<dbReference type="HOGENOM" id="CLU_158491_0_2_0"/>
<dbReference type="OrthoDB" id="9815192at2"/>
<dbReference type="Proteomes" id="UP000002208">
    <property type="component" value="Chromosome"/>
</dbReference>
<dbReference type="GO" id="GO:0022625">
    <property type="term" value="C:cytosolic large ribosomal subunit"/>
    <property type="evidence" value="ECO:0007669"/>
    <property type="project" value="TreeGrafter"/>
</dbReference>
<dbReference type="GO" id="GO:0003735">
    <property type="term" value="F:structural constituent of ribosome"/>
    <property type="evidence" value="ECO:0007669"/>
    <property type="project" value="InterPro"/>
</dbReference>
<dbReference type="GO" id="GO:0006412">
    <property type="term" value="P:translation"/>
    <property type="evidence" value="ECO:0007669"/>
    <property type="project" value="UniProtKB-UniRule"/>
</dbReference>
<dbReference type="CDD" id="cd00427">
    <property type="entry name" value="Ribosomal_L29_HIP"/>
    <property type="match status" value="1"/>
</dbReference>
<dbReference type="FunFam" id="1.10.287.310:FF:000001">
    <property type="entry name" value="50S ribosomal protein L29"/>
    <property type="match status" value="1"/>
</dbReference>
<dbReference type="Gene3D" id="1.10.287.310">
    <property type="match status" value="1"/>
</dbReference>
<dbReference type="HAMAP" id="MF_00374">
    <property type="entry name" value="Ribosomal_uL29"/>
    <property type="match status" value="1"/>
</dbReference>
<dbReference type="InterPro" id="IPR050063">
    <property type="entry name" value="Ribosomal_protein_uL29"/>
</dbReference>
<dbReference type="InterPro" id="IPR001854">
    <property type="entry name" value="Ribosomal_uL29"/>
</dbReference>
<dbReference type="InterPro" id="IPR036049">
    <property type="entry name" value="Ribosomal_uL29_sf"/>
</dbReference>
<dbReference type="NCBIfam" id="TIGR00012">
    <property type="entry name" value="L29"/>
    <property type="match status" value="1"/>
</dbReference>
<dbReference type="PANTHER" id="PTHR10916">
    <property type="entry name" value="60S RIBOSOMAL PROTEIN L35/50S RIBOSOMAL PROTEIN L29"/>
    <property type="match status" value="1"/>
</dbReference>
<dbReference type="PANTHER" id="PTHR10916:SF0">
    <property type="entry name" value="LARGE RIBOSOMAL SUBUNIT PROTEIN UL29C"/>
    <property type="match status" value="1"/>
</dbReference>
<dbReference type="Pfam" id="PF00831">
    <property type="entry name" value="Ribosomal_L29"/>
    <property type="match status" value="1"/>
</dbReference>
<dbReference type="SUPFAM" id="SSF46561">
    <property type="entry name" value="Ribosomal protein L29 (L29p)"/>
    <property type="match status" value="1"/>
</dbReference>
<evidence type="ECO:0000255" key="1">
    <source>
        <dbReference type="HAMAP-Rule" id="MF_00374"/>
    </source>
</evidence>
<evidence type="ECO:0000305" key="2"/>
<feature type="chain" id="PRO_1000205618" description="Large ribosomal subunit protein uL29">
    <location>
        <begin position="1"/>
        <end position="66"/>
    </location>
</feature>